<sequence>MRCPYCGGLDTQVKDSRPSDDASAIRRRRICPDCGGRFTTFERVQLRDLTVVKRSGRRVPFDRDKLQRSIDVALRKRPVEADRVERLVSGIARQLESGGEAEVSSEAIGELVMEGLKALDDVAYVRFASVYKNFREARDFEELLGRLNGAGRPGGEPEPPDEAAPGPAAAPGEGGEAPARRARSRA</sequence>
<gene>
    <name evidence="1" type="primary">nrdR</name>
    <name type="ordered locus">M446_3103</name>
</gene>
<comment type="function">
    <text evidence="1">Negatively regulates transcription of bacterial ribonucleotide reductase nrd genes and operons by binding to NrdR-boxes.</text>
</comment>
<comment type="cofactor">
    <cofactor evidence="1">
        <name>Zn(2+)</name>
        <dbReference type="ChEBI" id="CHEBI:29105"/>
    </cofactor>
    <text evidence="1">Binds 1 zinc ion.</text>
</comment>
<comment type="similarity">
    <text evidence="1">Belongs to the NrdR family.</text>
</comment>
<keyword id="KW-0067">ATP-binding</keyword>
<keyword id="KW-0238">DNA-binding</keyword>
<keyword id="KW-0479">Metal-binding</keyword>
<keyword id="KW-0547">Nucleotide-binding</keyword>
<keyword id="KW-0678">Repressor</keyword>
<keyword id="KW-0804">Transcription</keyword>
<keyword id="KW-0805">Transcription regulation</keyword>
<keyword id="KW-0862">Zinc</keyword>
<keyword id="KW-0863">Zinc-finger</keyword>
<accession>B0UML4</accession>
<protein>
    <recommendedName>
        <fullName evidence="1">Transcriptional repressor NrdR</fullName>
    </recommendedName>
</protein>
<evidence type="ECO:0000255" key="1">
    <source>
        <dbReference type="HAMAP-Rule" id="MF_00440"/>
    </source>
</evidence>
<evidence type="ECO:0000256" key="2">
    <source>
        <dbReference type="SAM" id="MobiDB-lite"/>
    </source>
</evidence>
<dbReference type="EMBL" id="CP000943">
    <property type="protein sequence ID" value="ACA17513.1"/>
    <property type="molecule type" value="Genomic_DNA"/>
</dbReference>
<dbReference type="RefSeq" id="WP_012332913.1">
    <property type="nucleotide sequence ID" value="NC_010511.1"/>
</dbReference>
<dbReference type="SMR" id="B0UML4"/>
<dbReference type="STRING" id="426117.M446_3103"/>
<dbReference type="KEGG" id="met:M446_3103"/>
<dbReference type="eggNOG" id="COG1327">
    <property type="taxonomic scope" value="Bacteria"/>
</dbReference>
<dbReference type="HOGENOM" id="CLU_108412_0_1_5"/>
<dbReference type="GO" id="GO:0005524">
    <property type="term" value="F:ATP binding"/>
    <property type="evidence" value="ECO:0007669"/>
    <property type="project" value="UniProtKB-KW"/>
</dbReference>
<dbReference type="GO" id="GO:0003677">
    <property type="term" value="F:DNA binding"/>
    <property type="evidence" value="ECO:0007669"/>
    <property type="project" value="UniProtKB-KW"/>
</dbReference>
<dbReference type="GO" id="GO:0008270">
    <property type="term" value="F:zinc ion binding"/>
    <property type="evidence" value="ECO:0007669"/>
    <property type="project" value="UniProtKB-UniRule"/>
</dbReference>
<dbReference type="GO" id="GO:0045892">
    <property type="term" value="P:negative regulation of DNA-templated transcription"/>
    <property type="evidence" value="ECO:0007669"/>
    <property type="project" value="UniProtKB-UniRule"/>
</dbReference>
<dbReference type="HAMAP" id="MF_00440">
    <property type="entry name" value="NrdR"/>
    <property type="match status" value="1"/>
</dbReference>
<dbReference type="InterPro" id="IPR005144">
    <property type="entry name" value="ATP-cone_dom"/>
</dbReference>
<dbReference type="InterPro" id="IPR055173">
    <property type="entry name" value="NrdR-like_N"/>
</dbReference>
<dbReference type="InterPro" id="IPR003796">
    <property type="entry name" value="RNR_NrdR-like"/>
</dbReference>
<dbReference type="NCBIfam" id="TIGR00244">
    <property type="entry name" value="transcriptional regulator NrdR"/>
    <property type="match status" value="1"/>
</dbReference>
<dbReference type="PANTHER" id="PTHR30455">
    <property type="entry name" value="TRANSCRIPTIONAL REPRESSOR NRDR"/>
    <property type="match status" value="1"/>
</dbReference>
<dbReference type="PANTHER" id="PTHR30455:SF2">
    <property type="entry name" value="TRANSCRIPTIONAL REPRESSOR NRDR"/>
    <property type="match status" value="1"/>
</dbReference>
<dbReference type="Pfam" id="PF03477">
    <property type="entry name" value="ATP-cone"/>
    <property type="match status" value="1"/>
</dbReference>
<dbReference type="Pfam" id="PF22811">
    <property type="entry name" value="Zn_ribbon_NrdR"/>
    <property type="match status" value="1"/>
</dbReference>
<dbReference type="PROSITE" id="PS51161">
    <property type="entry name" value="ATP_CONE"/>
    <property type="match status" value="1"/>
</dbReference>
<name>NRDR_METS4</name>
<feature type="chain" id="PRO_1000124525" description="Transcriptional repressor NrdR">
    <location>
        <begin position="1"/>
        <end position="186"/>
    </location>
</feature>
<feature type="domain" description="ATP-cone" evidence="1">
    <location>
        <begin position="49"/>
        <end position="139"/>
    </location>
</feature>
<feature type="zinc finger region" evidence="1">
    <location>
        <begin position="3"/>
        <end position="34"/>
    </location>
</feature>
<feature type="region of interest" description="Disordered" evidence="2">
    <location>
        <begin position="1"/>
        <end position="24"/>
    </location>
</feature>
<feature type="region of interest" description="Disordered" evidence="2">
    <location>
        <begin position="146"/>
        <end position="186"/>
    </location>
</feature>
<feature type="compositionally biased region" description="Basic and acidic residues" evidence="2">
    <location>
        <begin position="12"/>
        <end position="24"/>
    </location>
</feature>
<proteinExistence type="inferred from homology"/>
<reference key="1">
    <citation type="submission" date="2008-02" db="EMBL/GenBank/DDBJ databases">
        <title>Complete sequence of chromosome of Methylobacterium sp. 4-46.</title>
        <authorList>
            <consortium name="US DOE Joint Genome Institute"/>
            <person name="Copeland A."/>
            <person name="Lucas S."/>
            <person name="Lapidus A."/>
            <person name="Glavina del Rio T."/>
            <person name="Dalin E."/>
            <person name="Tice H."/>
            <person name="Bruce D."/>
            <person name="Goodwin L."/>
            <person name="Pitluck S."/>
            <person name="Chertkov O."/>
            <person name="Brettin T."/>
            <person name="Detter J.C."/>
            <person name="Han C."/>
            <person name="Kuske C.R."/>
            <person name="Schmutz J."/>
            <person name="Larimer F."/>
            <person name="Land M."/>
            <person name="Hauser L."/>
            <person name="Kyrpides N."/>
            <person name="Ivanova N."/>
            <person name="Marx C.J."/>
            <person name="Richardson P."/>
        </authorList>
    </citation>
    <scope>NUCLEOTIDE SEQUENCE [LARGE SCALE GENOMIC DNA]</scope>
    <source>
        <strain>4-46</strain>
    </source>
</reference>
<organism>
    <name type="scientific">Methylobacterium sp. (strain 4-46)</name>
    <dbReference type="NCBI Taxonomy" id="426117"/>
    <lineage>
        <taxon>Bacteria</taxon>
        <taxon>Pseudomonadati</taxon>
        <taxon>Pseudomonadota</taxon>
        <taxon>Alphaproteobacteria</taxon>
        <taxon>Hyphomicrobiales</taxon>
        <taxon>Methylobacteriaceae</taxon>
        <taxon>Methylobacterium</taxon>
    </lineage>
</organism>